<comment type="function">
    <text evidence="3 4 6 7 8 10 12 13">Possesses multiple, substituting fibronectin (Fn) binding regions, each capable of conferring adherence to both soluble and immobilized forms of Fn. This confers to S.aureus the ability to invade endothelial cells both in vivo and in vitro, without requiring additional factors, although in a slow and inefficient way through actin rearrangements in host cells. This invasion process is mediated by integrin alpha-5/beta-1. Promotes bacterial attachment to both soluble and immobilized forms of fibrinogen (Fg) by means of a unique binding site localized within the 17 C-terminal residues of the gamma-chain of human Fg. Both plasma proteins (Fn and Fg) function as a bridge between bacterium and host cell. Promotes attachment to immobilized elastin peptides in a dose-dependent and saturable manner. Promotes attachment to both full-length and segments of immobilized human tropoelastin at multiple sites in a dose and pH-dependent manner. Promotes adherence to and aggregation of activated platelets independently of other S.aureus surface molecules. Is a critical mediator implicated in the induction of experimental endocarditis in rats with catheter-induced aortic vegetations, promoting both colonization and persistence of the bacterium into the host.</text>
</comment>
<comment type="interaction">
    <interactant intactId="EBI-8398157">
        <id>P14738</id>
    </interactant>
    <interactant intactId="EBI-1220319">
        <id>P02751</id>
        <label>FN1</label>
    </interactant>
    <organismsDiffer>true</organismsDiffer>
    <experiments>23</experiments>
</comment>
<comment type="subcellular location">
    <subcellularLocation>
        <location evidence="1 16">Secreted</location>
        <location evidence="1 16">Cell wall</location>
        <topology evidence="1 16 17">Peptidoglycan-anchor</topology>
    </subcellularLocation>
    <text evidence="16 17">Anchored to the cell wall by sortase A.</text>
</comment>
<comment type="induction">
    <text evidence="5 9 14">Expressed predominantly on cells from early exponential phase of growth. Up-regulated by sigma-B factor during early growth stages but not in later stages, although this positive effect on transcription is most probably indirect. Up-regulated by SarA. Down-regulated by Agr.</text>
</comment>
<comment type="miscellaneous">
    <text>Fg-binding activity is not regulated by the divalent cations Ca(2+), Mn(2+) or Mg(2+).</text>
</comment>
<comment type="miscellaneous">
    <text>Deletion of the Fg-binding domain of FnbA abrogates the ability to promote cardiac valve infection and persistence in vivo.</text>
</comment>
<comment type="miscellaneous">
    <text>The mutagenesis studies described in PubMed:17302800 were done with region A alone and not with the entire protein.</text>
</comment>
<comment type="miscellaneous">
    <text>Mutants lacking C-terminal residues from the ligand binding A region bind to Fg with a reduced affinity or are unable to bind to both Fg and elastin, depending on the extension of the deletion present in this region. Individual constructs of regions spanning amino acids from 194-336 or 337-511 were unable to bind fibrinogen or elastin.</text>
</comment>
<comment type="sequence caution" evidence="15">
    <conflict type="erroneous initiation">
        <sequence resource="EMBL-CDS" id="ABD31806"/>
    </conflict>
    <text>Truncated N-terminus.</text>
</comment>
<protein>
    <recommendedName>
        <fullName>Fibronectin-binding protein A</fullName>
        <shortName>FnbpA</shortName>
    </recommendedName>
</protein>
<proteinExistence type="evidence at protein level"/>
<accession>P14738</accession>
<accession>Q2G1T8</accession>
<gene>
    <name type="primary">fnbA</name>
    <name type="ordered locus">SAOUHSC_02803</name>
</gene>
<name>FNBA_STAA8</name>
<dbReference type="EMBL" id="J04151">
    <property type="protein sequence ID" value="AAA26632.1"/>
    <property type="molecule type" value="Genomic_DNA"/>
</dbReference>
<dbReference type="EMBL" id="CP000253">
    <property type="protein sequence ID" value="ABD31806.1"/>
    <property type="status" value="ALT_INIT"/>
    <property type="molecule type" value="Genomic_DNA"/>
</dbReference>
<dbReference type="RefSeq" id="WP_000794582.1">
    <property type="nucleotide sequence ID" value="NZ_LS483365.1"/>
</dbReference>
<dbReference type="RefSeq" id="WP_011447070.1">
    <property type="nucleotide sequence ID" value="NC_007795.1"/>
</dbReference>
<dbReference type="RefSeq" id="YP_501262.1">
    <property type="nucleotide sequence ID" value="NC_007795.1"/>
</dbReference>
<dbReference type="PDB" id="2RKY">
    <property type="method" value="X-ray"/>
    <property type="resolution" value="1.80 A"/>
    <property type="chains" value="B/D=508-530"/>
</dbReference>
<dbReference type="PDB" id="2RKZ">
    <property type="method" value="X-ray"/>
    <property type="resolution" value="2.00 A"/>
    <property type="chains" value="M/N/O/P/Q/R=529-549"/>
</dbReference>
<dbReference type="PDB" id="2RL0">
    <property type="method" value="X-ray"/>
    <property type="resolution" value="2.00 A"/>
    <property type="chains" value="C/E/G/H/J/L=638-655"/>
</dbReference>
<dbReference type="PDB" id="3CAL">
    <property type="method" value="X-ray"/>
    <property type="resolution" value="1.70 A"/>
    <property type="chains" value="B/D=655-672"/>
</dbReference>
<dbReference type="PDB" id="4B5Z">
    <property type="method" value="X-ray"/>
    <property type="resolution" value="2.20 A"/>
    <property type="chains" value="A=189-505"/>
</dbReference>
<dbReference type="PDB" id="4B60">
    <property type="method" value="X-ray"/>
    <property type="resolution" value="1.83 A"/>
    <property type="chains" value="A/B=189-505"/>
</dbReference>
<dbReference type="PDBsum" id="2RKY"/>
<dbReference type="PDBsum" id="2RKZ"/>
<dbReference type="PDBsum" id="2RL0"/>
<dbReference type="PDBsum" id="3CAL"/>
<dbReference type="PDBsum" id="4B5Z"/>
<dbReference type="PDBsum" id="4B60"/>
<dbReference type="SMR" id="P14738"/>
<dbReference type="DIP" id="DIP-46263N"/>
<dbReference type="IntAct" id="P14738">
    <property type="interactions" value="1"/>
</dbReference>
<dbReference type="MINT" id="P14738"/>
<dbReference type="STRING" id="93061.SAOUHSC_02803"/>
<dbReference type="PaxDb" id="1280-SAXN108_2750"/>
<dbReference type="GeneID" id="3921457"/>
<dbReference type="KEGG" id="sao:SAOUHSC_02803"/>
<dbReference type="PATRIC" id="fig|93061.5.peg.2536"/>
<dbReference type="eggNOG" id="COG4932">
    <property type="taxonomic scope" value="Bacteria"/>
</dbReference>
<dbReference type="HOGENOM" id="CLU_009849_1_0_9"/>
<dbReference type="OrthoDB" id="2412677at2"/>
<dbReference type="EvolutionaryTrace" id="P14738"/>
<dbReference type="PRO" id="PR:P14738"/>
<dbReference type="Proteomes" id="UP000008816">
    <property type="component" value="Chromosome"/>
</dbReference>
<dbReference type="GO" id="GO:0005576">
    <property type="term" value="C:extracellular region"/>
    <property type="evidence" value="ECO:0007669"/>
    <property type="project" value="UniProtKB-KW"/>
</dbReference>
<dbReference type="GO" id="GO:0070051">
    <property type="term" value="F:fibrinogen binding"/>
    <property type="evidence" value="ECO:0000315"/>
    <property type="project" value="CAFA"/>
</dbReference>
<dbReference type="GO" id="GO:0001968">
    <property type="term" value="F:fibronectin binding"/>
    <property type="evidence" value="ECO:0000353"/>
    <property type="project" value="CAFA"/>
</dbReference>
<dbReference type="GO" id="GO:0098630">
    <property type="term" value="P:aggregation of unicellular organisms"/>
    <property type="evidence" value="ECO:0000315"/>
    <property type="project" value="CAFA"/>
</dbReference>
<dbReference type="GO" id="GO:0007155">
    <property type="term" value="P:cell adhesion"/>
    <property type="evidence" value="ECO:0007669"/>
    <property type="project" value="UniProtKB-KW"/>
</dbReference>
<dbReference type="DisProt" id="DP00025"/>
<dbReference type="FunFam" id="2.60.40.1280:FF:000004">
    <property type="entry name" value="Fibronectin-binding protein A"/>
    <property type="match status" value="1"/>
</dbReference>
<dbReference type="FunFam" id="2.60.40.1290:FF:000002">
    <property type="entry name" value="Fibronectin-binding protein A"/>
    <property type="match status" value="1"/>
</dbReference>
<dbReference type="Gene3D" id="2.60.40.1280">
    <property type="match status" value="1"/>
</dbReference>
<dbReference type="Gene3D" id="2.60.40.1290">
    <property type="match status" value="1"/>
</dbReference>
<dbReference type="InterPro" id="IPR011266">
    <property type="entry name" value="Adhesin_Fg-bd_dom_2"/>
</dbReference>
<dbReference type="InterPro" id="IPR008966">
    <property type="entry name" value="Adhesion_dom_sf"/>
</dbReference>
<dbReference type="InterPro" id="IPR011252">
    <property type="entry name" value="Fibrogen-bd_dom1"/>
</dbReference>
<dbReference type="InterPro" id="IPR004237">
    <property type="entry name" value="Fibron_repeat-bd"/>
</dbReference>
<dbReference type="InterPro" id="IPR019931">
    <property type="entry name" value="LPXTG_anchor"/>
</dbReference>
<dbReference type="InterPro" id="IPR041171">
    <property type="entry name" value="SDR_Ig"/>
</dbReference>
<dbReference type="InterPro" id="IPR005877">
    <property type="entry name" value="YSIRK_signal_dom"/>
</dbReference>
<dbReference type="NCBIfam" id="TIGR01167">
    <property type="entry name" value="LPXTG_anchor"/>
    <property type="match status" value="1"/>
</dbReference>
<dbReference type="NCBIfam" id="TIGR01168">
    <property type="entry name" value="YSIRK_signal"/>
    <property type="match status" value="1"/>
</dbReference>
<dbReference type="PANTHER" id="PTHR24216">
    <property type="entry name" value="PAXILLIN-RELATED"/>
    <property type="match status" value="1"/>
</dbReference>
<dbReference type="Pfam" id="PF17961">
    <property type="entry name" value="Big_8"/>
    <property type="match status" value="1"/>
</dbReference>
<dbReference type="Pfam" id="PF02986">
    <property type="entry name" value="Fn_bind"/>
    <property type="match status" value="3"/>
</dbReference>
<dbReference type="Pfam" id="PF00746">
    <property type="entry name" value="Gram_pos_anchor"/>
    <property type="match status" value="1"/>
</dbReference>
<dbReference type="Pfam" id="PF10425">
    <property type="entry name" value="SdrG_C_C"/>
    <property type="match status" value="1"/>
</dbReference>
<dbReference type="Pfam" id="PF04650">
    <property type="entry name" value="YSIRK_signal"/>
    <property type="match status" value="1"/>
</dbReference>
<dbReference type="SUPFAM" id="SSF49401">
    <property type="entry name" value="Bacterial adhesins"/>
    <property type="match status" value="2"/>
</dbReference>
<dbReference type="PROSITE" id="PS50847">
    <property type="entry name" value="GRAM_POS_ANCHORING"/>
    <property type="match status" value="1"/>
</dbReference>
<organism>
    <name type="scientific">Staphylococcus aureus (strain NCTC 8325 / PS 47)</name>
    <dbReference type="NCBI Taxonomy" id="93061"/>
    <lineage>
        <taxon>Bacteria</taxon>
        <taxon>Bacillati</taxon>
        <taxon>Bacillota</taxon>
        <taxon>Bacilli</taxon>
        <taxon>Bacillales</taxon>
        <taxon>Staphylococcaceae</taxon>
        <taxon>Staphylococcus</taxon>
    </lineage>
</organism>
<reference key="1">
    <citation type="journal article" date="1989" name="Proc. Natl. Acad. Sci. U.S.A.">
        <title>Nucleotide sequence of the gene for a fibronectin-binding protein from Staphylococcus aureus: use of this peptide sequence in the synthesis of biologically active peptides.</title>
        <authorList>
            <person name="Signaes C."/>
            <person name="Raucci G."/>
            <person name="Joensson K."/>
            <person name="Lindgren P.-E."/>
            <person name="Anantharamaiah G.M."/>
            <person name="Hoeoek M."/>
            <person name="Lindberg M."/>
        </authorList>
    </citation>
    <scope>NUCLEOTIDE SEQUENCE [GENOMIC DNA]</scope>
    <scope>FUNCTION IN FIBRONECTIN BINDING</scope>
</reference>
<reference key="2">
    <citation type="book" date="2006" name="Gram positive pathogens, 2nd edition">
        <title>The Staphylococcus aureus NCTC 8325 genome.</title>
        <editorList>
            <person name="Fischetti V."/>
            <person name="Novick R."/>
            <person name="Ferretti J."/>
            <person name="Portnoy D."/>
            <person name="Rood J."/>
        </editorList>
        <authorList>
            <person name="Gillaspy A.F."/>
            <person name="Worrell V."/>
            <person name="Orvis J."/>
            <person name="Roe B.A."/>
            <person name="Dyer D.W."/>
            <person name="Iandolo J.J."/>
        </authorList>
    </citation>
    <scope>NUCLEOTIDE SEQUENCE [LARGE SCALE GENOMIC DNA]</scope>
    <source>
        <strain>NCTC 8325 / PS 47</strain>
    </source>
</reference>
<reference key="3">
    <citation type="journal article" date="1997" name="J. Bacteriol.">
        <title>Transcription of Staphylococcus aureus fibronectin binding protein genes is negatively regulated by agr and an agr-independent mechanism.</title>
        <authorList>
            <person name="Saravia-Otten P."/>
            <person name="Mueller H.-P."/>
            <person name="Arvidson S."/>
        </authorList>
    </citation>
    <scope>INDUCTION BY AGR</scope>
</reference>
<reference key="4">
    <citation type="journal article" date="2000" name="J. Biol. Chem.">
        <title>The fibronectin-binding MSCRAMM fnbpA of Staphylococcus aureus is a bifunctional protein that also binds to fibrinogen.</title>
        <authorList>
            <person name="Wann E.R."/>
            <person name="Gurusiddappa S."/>
            <person name="Hoeoek M."/>
        </authorList>
    </citation>
    <scope>FUNCTION IN FIBRINOGEN BINDING</scope>
    <scope>REGULATION</scope>
</reference>
<reference key="5">
    <citation type="journal article" date="2001" name="Cell. Microbiol.">
        <title>Fibronectin-binding protein A of Staphylococcus aureus has multiple, substituting, binding regions that mediate adherence to fibronectin and invasion of endothelial cells.</title>
        <authorList>
            <person name="Massey R.C."/>
            <person name="Kantzanou M.N."/>
            <person name="Fowler T."/>
            <person name="Day N.P.J."/>
            <person name="Schofield K."/>
            <person name="Wann E.R."/>
            <person name="Berendt A.R."/>
            <person name="Hoeoek M."/>
            <person name="Peacock S.J."/>
        </authorList>
    </citation>
    <scope>FUNCTION IN FIBRONECTIN BINDING</scope>
</reference>
<reference key="6">
    <citation type="journal article" date="2001" name="Infect. Immun.">
        <title>Reassessing the role of Staphylococcus aureus clumping factor and fibronectin-binding protein by expression in Lactococcus lactis.</title>
        <authorList>
            <person name="Que Y.-A."/>
            <person name="Francois P."/>
            <person name="Haefliger J.-A."/>
            <person name="Entenza J.-M."/>
            <person name="Vaudaux P."/>
            <person name="Moreillon P."/>
        </authorList>
    </citation>
    <scope>FUNCTION IN FIBRONECTIN AND FIBRINOGEN BINDING</scope>
    <scope>ROLE IN ENDOVASCULAR INFECTION</scope>
</reference>
<reference key="7">
    <citation type="journal article" date="2001" name="J. Bacteriol.">
        <title>Transcription profiling-based identification of Staphylococcus aureus genes regulated by the agr and/or sarA loci.</title>
        <authorList>
            <person name="Dunman P.M."/>
            <person name="Murphy E."/>
            <person name="Haney S."/>
            <person name="Palacios D."/>
            <person name="Tucker-Kellogg G."/>
            <person name="Wu S."/>
            <person name="Brown E.L."/>
            <person name="Zagursky R.J."/>
            <person name="Shlaes D."/>
            <person name="Projan S.J."/>
        </authorList>
    </citation>
    <scope>INDUCTION BY SARA</scope>
</reference>
<reference key="8">
    <citation type="journal article" date="2002" name="Proc. Natl. Acad. Sci. U.S.A.">
        <title>An iron-regulated sortase anchors a class of surface protein during Staphylococcus aureus pathogenesis.</title>
        <authorList>
            <person name="Mazmanian S.K."/>
            <person name="Ton-That H."/>
            <person name="Su K."/>
            <person name="Schneewind O."/>
        </authorList>
    </citation>
    <scope>SUBCELLULAR LOCATION</scope>
    <scope>PROCESSING BY SORTASE A</scope>
    <source>
        <strain>RN4220</strain>
    </source>
</reference>
<reference key="9">
    <citation type="journal article" date="2004" name="Biochemistry">
        <title>Analysis of the substrate specificity of the Staphylococcus aureus sortase transpeptidase SrtA.</title>
        <authorList>
            <person name="Kruger R.G."/>
            <person name="Otvos B."/>
            <person name="Frankel B.A."/>
            <person name="Bentley M."/>
            <person name="Dostal P."/>
            <person name="McCafferty D.G."/>
        </authorList>
    </citation>
    <scope>PROBABLE CELL WALL ANCHORING</scope>
    <source>
        <strain>Newman</strain>
    </source>
</reference>
<reference key="10">
    <citation type="journal article" date="2004" name="J. Biol. Chem.">
        <title>The N-terminal A domain of fibronectin-binding proteins A and B promotes adhesion of Staphylococcus aureus to elastin.</title>
        <authorList>
            <person name="Roche F.M."/>
            <person name="Downer R."/>
            <person name="Keane F."/>
            <person name="Speziale P."/>
            <person name="Park P.W."/>
            <person name="Foster T.J."/>
        </authorList>
    </citation>
    <scope>FUNCTION IN ELASTIN BINDING</scope>
</reference>
<reference key="11">
    <citation type="journal article" date="2004" name="J. Infect. Dis.">
        <title>Staphylococcus aureus fibronectin-binding protein (fnbp)-mediated adherence to platelets, and aggregation of platelets induced by fnbpA but not by fnbpB.</title>
        <authorList>
            <person name="Heilmann C."/>
            <person name="Niemann S."/>
            <person name="Sinha B."/>
            <person name="Herrmann M."/>
            <person name="Kehrel B.E."/>
            <person name="Peters G."/>
        </authorList>
    </citation>
    <scope>FUNCTION IN PLATELET AGGREGATION</scope>
</reference>
<reference key="12">
    <citation type="journal article" date="2005" name="Infect. Immun.">
        <title>Role of sigmaB in the expression of Staphylococcus aureus cell wall adhesins clfA and fnbA and contribution to infectivity in a rat model of experimental endocarditis.</title>
        <authorList>
            <person name="Entenza J.-M."/>
            <person name="Moreillon P."/>
            <person name="Senn M.M."/>
            <person name="Kormanec J."/>
            <person name="Dunman P.M."/>
            <person name="Berger-Baechi B."/>
            <person name="Projan S."/>
            <person name="Bischoff M."/>
        </authorList>
    </citation>
    <scope>INDUCTION BY SIGMA-B</scope>
</reference>
<reference key="13">
    <citation type="journal article" date="2005" name="J. Exp. Med.">
        <title>Fibrinogen and fibronectin binding cooperate for valve infection and invasion in Staphylococcus aureus experimental endocarditis.</title>
        <authorList>
            <person name="Que Y.-A."/>
            <person name="Haefliger J.-A."/>
            <person name="Piroth L."/>
            <person name="Francois P."/>
            <person name="Widmer E."/>
            <person name="Entenza J.M."/>
            <person name="Sinha B."/>
            <person name="Herrmann M."/>
            <person name="Francioli P."/>
            <person name="Vaudaux P."/>
            <person name="Moreillon P."/>
        </authorList>
    </citation>
    <scope>ROLE IN EXPERIMENTAL ENDOCARDITIS</scope>
</reference>
<reference key="14">
    <citation type="journal article" date="2006" name="Mol. Biol. Cell">
        <title>Staphylococcus aureus fibronectin binding protein-A induces motile attachment sites and complex actin remodeling in living endothelial cells.</title>
        <authorList>
            <person name="Schroeder A."/>
            <person name="Schroeder B."/>
            <person name="Roppenser B."/>
            <person name="Linder S."/>
            <person name="Sinha B."/>
            <person name="Faessler R."/>
            <person name="Aepfelbacher M."/>
        </authorList>
    </citation>
    <scope>MECHANISM OF INVASION</scope>
</reference>
<reference key="15">
    <citation type="journal article" date="2007" name="Biochemistry">
        <title>The N-terminal A domain of Staphylococcus aureus fibronectin-binding protein A binds to tropoelastin.</title>
        <authorList>
            <person name="Keane F.M."/>
            <person name="Clarke A.W."/>
            <person name="Foster T.J."/>
            <person name="Weiss A.S."/>
        </authorList>
    </citation>
    <scope>FUNCTION IN TROPOELASTIN BINDING</scope>
</reference>
<reference key="16">
    <citation type="journal article" date="2007" name="Mol. Microbiol.">
        <title>Fibrinogen and elastin bind to the same region within the A domain of fibronectin binding protein A, an MSCRAMM of Staphylococcus aureus.</title>
        <authorList>
            <person name="Keane F.M."/>
            <person name="Loughman A."/>
            <person name="Valtulina V."/>
            <person name="Brennan M."/>
            <person name="Speziale P."/>
            <person name="Foster T.J."/>
        </authorList>
    </citation>
    <scope>CHARACTERIZATION OF FIBRINOGEN AND ELASTIN-BINDING DOMAINS</scope>
    <scope>MUTAGENESIS OF GLY-222; ARG-224; ASN-304; PHE-306; THR-354; PHE-355; ASN-356; LYS-357; ALA-415; THR-417; 484-TYR--ASN-511; GLY-497; LEU-498; 499-VAL--ASN-511 AND 510-LYS-ASN-511</scope>
</reference>
<sequence length="1018" mass="111780">MKNNLRYGIRKHKLGAASVFLGTMIVVGMGQDKEAAASEQKTTTVEENGNSATDNKTSETQTTATNVNHIEETQSYNATVTEQPSNATQVTTEEAPKAVQAPQTAQPANIETVKEEVVKEEAKPQVKETTQSQDNSGDQRQVDLTPKKATQNQVAETQVEVAQPRTASESKPRVTRSADVAEAKEASNAKVETGTDVTSKVTVEIGSIEGHNNTNKVEPHAGQRAVLKYKLKFENGLHQGDYFDFTLSNNVNTHGVSTARKVPEIKNGSVVMATGEVLEGGKIRYTFTNDIEDKVDVTAELEINLFIDPKTVQTNGNQTITSTLNEEQTSKELDVKYKDGIGNYYANLNGSIETFNKANNRFSHVAFIKPNNGKTTSVTVTGTLMKGSNQNGNQPKVRIFEYLGNNEDIAKSVYANTTDTSKFKEVTSNMSGNLNLQNNGSYSLNIENLDKTYVVHYDGEYLNGTDEVDFRTQMVGHPEQLYKYYYDRGYTLTWDNGLVLYSNKANGNEKNGPIIQNNKFEYKEDTIKETLTGQYDKNLVTTVEEEYDSSTLDIDYHTAIDGGGGYVDGYIETIEETDSSAIDIDYHTAVDSEAGHVGGYTESSEESNPIDFEESTHENSKHHADVVEYEEDTNPGGGQVTTESNLVEFDEESTKGIVTGAVSDHTTVEDTKEYTTESNLIELVDELPEEHGQAQGPVEEITKNNHHISHSGLGTENGHGNYDVIEEIEENSHVDIKSELGYEGGQNSGNQSFEEDTEEDKPKYEQGGNIVDIDFDSVPQIHGQNKGNQSFEEDTEKDKPKYEHGGNIIDIDFDSVPHIHGFNKHTEIIEEDTNKDKPSYQFGGHNSVDFEEDTLPKVSGQNEGQQTIEEDTTPPIVPPTPPTPEVPSEPETPTPPTPEVPSEPETPTPPTPEVPSEPETPTPPTPEVPAEPGKPVPPAKEEPKKPSKPVEQGKVVTPVIEINEKVKAVAPTKKPQSKKSELPETGGEESTNKGMLFGGLFSILGLALLRRNKKNHKA</sequence>
<evidence type="ECO:0000255" key="1">
    <source>
        <dbReference type="PROSITE-ProRule" id="PRU00477"/>
    </source>
</evidence>
<evidence type="ECO:0000256" key="2">
    <source>
        <dbReference type="SAM" id="MobiDB-lite"/>
    </source>
</evidence>
<evidence type="ECO:0000269" key="3">
    <source>
    </source>
</evidence>
<evidence type="ECO:0000269" key="4">
    <source>
    </source>
</evidence>
<evidence type="ECO:0000269" key="5">
    <source>
    </source>
</evidence>
<evidence type="ECO:0000269" key="6">
    <source>
    </source>
</evidence>
<evidence type="ECO:0000269" key="7">
    <source>
    </source>
</evidence>
<evidence type="ECO:0000269" key="8">
    <source>
    </source>
</evidence>
<evidence type="ECO:0000269" key="9">
    <source>
    </source>
</evidence>
<evidence type="ECO:0000269" key="10">
    <source>
    </source>
</evidence>
<evidence type="ECO:0000269" key="11">
    <source>
    </source>
</evidence>
<evidence type="ECO:0000269" key="12">
    <source>
    </source>
</evidence>
<evidence type="ECO:0000269" key="13">
    <source>
    </source>
</evidence>
<evidence type="ECO:0000269" key="14">
    <source>
    </source>
</evidence>
<evidence type="ECO:0000305" key="15"/>
<evidence type="ECO:0000305" key="16">
    <source>
    </source>
</evidence>
<evidence type="ECO:0000305" key="17">
    <source>
    </source>
</evidence>
<evidence type="ECO:0007829" key="18">
    <source>
        <dbReference type="PDB" id="2RKY"/>
    </source>
</evidence>
<evidence type="ECO:0007829" key="19">
    <source>
        <dbReference type="PDB" id="2RKZ"/>
    </source>
</evidence>
<evidence type="ECO:0007829" key="20">
    <source>
        <dbReference type="PDB" id="2RL0"/>
    </source>
</evidence>
<evidence type="ECO:0007829" key="21">
    <source>
        <dbReference type="PDB" id="3CAL"/>
    </source>
</evidence>
<evidence type="ECO:0007829" key="22">
    <source>
        <dbReference type="PDB" id="4B5Z"/>
    </source>
</evidence>
<evidence type="ECO:0007829" key="23">
    <source>
        <dbReference type="PDB" id="4B60"/>
    </source>
</evidence>
<keyword id="KW-0002">3D-structure</keyword>
<keyword id="KW-0130">Cell adhesion</keyword>
<keyword id="KW-0134">Cell wall</keyword>
<keyword id="KW-0572">Peptidoglycan-anchor</keyword>
<keyword id="KW-1185">Reference proteome</keyword>
<keyword id="KW-0677">Repeat</keyword>
<keyword id="KW-0964">Secreted</keyword>
<keyword id="KW-0732">Signal</keyword>
<keyword id="KW-0843">Virulence</keyword>
<feature type="signal peptide">
    <location>
        <begin position="1"/>
        <end position="36"/>
    </location>
</feature>
<feature type="chain" id="PRO_0000005605" description="Fibronectin-binding protein A">
    <location>
        <begin position="37"/>
        <end position="985"/>
    </location>
</feature>
<feature type="propeptide" id="PRO_0000005606" description="Removed by sortase" evidence="1 16 17">
    <location>
        <begin position="986"/>
        <end position="1018"/>
    </location>
</feature>
<feature type="repeat" description="B-1">
    <location>
        <begin position="545"/>
        <end position="574"/>
    </location>
</feature>
<feature type="repeat" description="B-2">
    <location>
        <begin position="575"/>
        <end position="604"/>
    </location>
</feature>
<feature type="repeat" description="D-1">
    <location>
        <begin position="745"/>
        <end position="782"/>
    </location>
</feature>
<feature type="repeat" description="D-2">
    <location>
        <begin position="783"/>
        <end position="820"/>
    </location>
</feature>
<feature type="repeat" description="D-3">
    <location>
        <begin position="821"/>
        <end position="859"/>
    </location>
</feature>
<feature type="repeat" description="D-4; truncated">
    <location>
        <begin position="860"/>
        <end position="878"/>
    </location>
</feature>
<feature type="repeat" description="WR 1">
    <location>
        <begin position="879"/>
        <end position="892"/>
    </location>
</feature>
<feature type="repeat" description="WR 2">
    <location>
        <begin position="893"/>
        <end position="906"/>
    </location>
</feature>
<feature type="repeat" description="WR 3">
    <location>
        <begin position="907"/>
        <end position="920"/>
    </location>
</feature>
<feature type="repeat" description="WR 4">
    <location>
        <begin position="921"/>
        <end position="934"/>
    </location>
</feature>
<feature type="repeat" description="WR 5">
    <location>
        <begin position="935"/>
        <end position="948"/>
    </location>
</feature>
<feature type="region of interest" description="Ligand-binding A region">
    <location>
        <begin position="37"/>
        <end position="511"/>
    </location>
</feature>
<feature type="region of interest" description="Disordered" evidence="2">
    <location>
        <begin position="38"/>
        <end position="61"/>
    </location>
</feature>
<feature type="region of interest" description="Disordered" evidence="2">
    <location>
        <begin position="78"/>
        <end position="195"/>
    </location>
</feature>
<feature type="region of interest" description="Fibrinogen/elastin/tropoelastin-binding">
    <location>
        <begin position="194"/>
        <end position="511"/>
    </location>
</feature>
<feature type="region of interest" description="Fibronectin-binding">
    <location>
        <begin position="512"/>
        <end position="872"/>
    </location>
</feature>
<feature type="region of interest" description="2 X approximate tandem repeats">
    <location>
        <begin position="545"/>
        <end position="604"/>
    </location>
</feature>
<feature type="region of interest" description="Disordered" evidence="2">
    <location>
        <begin position="595"/>
        <end position="622"/>
    </location>
</feature>
<feature type="region of interest" description="Disordered" evidence="2">
    <location>
        <begin position="740"/>
        <end position="813"/>
    </location>
</feature>
<feature type="region of interest" description="4 X approximate tandem repeats, D-3 repeat has more fibronectin-binding activity">
    <location>
        <begin position="745"/>
        <end position="878"/>
    </location>
</feature>
<feature type="region of interest" description="Disordered" evidence="2">
    <location>
        <begin position="827"/>
        <end position="997"/>
    </location>
</feature>
<feature type="region of interest" description="5 X tandem repeats, Pro-rich (WR)">
    <location>
        <begin position="879"/>
        <end position="948"/>
    </location>
</feature>
<feature type="short sequence motif" description="YSIRK-G/S signaling motif" evidence="15">
    <location>
        <begin position="7"/>
        <end position="18"/>
    </location>
</feature>
<feature type="short sequence motif" description="LPXTG sorting signal" evidence="1">
    <location>
        <begin position="982"/>
        <end position="986"/>
    </location>
</feature>
<feature type="compositionally biased region" description="Polar residues" evidence="2">
    <location>
        <begin position="39"/>
        <end position="61"/>
    </location>
</feature>
<feature type="compositionally biased region" description="Polar residues" evidence="2">
    <location>
        <begin position="78"/>
        <end position="92"/>
    </location>
</feature>
<feature type="compositionally biased region" description="Basic and acidic residues" evidence="2">
    <location>
        <begin position="112"/>
        <end position="126"/>
    </location>
</feature>
<feature type="compositionally biased region" description="Polar residues" evidence="2">
    <location>
        <begin position="129"/>
        <end position="139"/>
    </location>
</feature>
<feature type="compositionally biased region" description="Basic and acidic residues" evidence="2">
    <location>
        <begin position="827"/>
        <end position="838"/>
    </location>
</feature>
<feature type="compositionally biased region" description="Pro residues" evidence="2">
    <location>
        <begin position="875"/>
        <end position="938"/>
    </location>
</feature>
<feature type="modified residue" description="Pentaglycyl murein peptidoglycan amidated threonine" evidence="1">
    <location>
        <position position="985"/>
    </location>
</feature>
<feature type="mutagenesis site" description="No change in elastin or fibrinogen binding." evidence="11">
    <original>G</original>
    <variation>A</variation>
    <location>
        <position position="222"/>
    </location>
</feature>
<feature type="mutagenesis site" description="Significant reduction in fibrinogen and elastin binding." evidence="11">
    <original>R</original>
    <variation>A</variation>
    <location>
        <position position="224"/>
    </location>
</feature>
<feature type="mutagenesis site" description="Significant reduction in fibrinogen and elastin binding." evidence="11">
    <original>N</original>
    <variation>A</variation>
    <location>
        <position position="304"/>
    </location>
</feature>
<feature type="mutagenesis site" description="Significant reduction in fibrinogen and elastin binding." evidence="11">
    <original>F</original>
    <variation>A</variation>
    <location>
        <position position="306"/>
    </location>
</feature>
<feature type="mutagenesis site" description="Small reduction in fibrinogen binding and greater reduction in elastin binding; when associated with G-356." evidence="11">
    <original>T</original>
    <variation>A</variation>
    <location>
        <position position="354"/>
    </location>
</feature>
<feature type="mutagenesis site" description="No reduction in elastin binding. Significant reduction in fibrinogen binding." evidence="11">
    <original>F</original>
    <variation>A</variation>
    <location>
        <position position="355"/>
    </location>
</feature>
<feature type="mutagenesis site" description="Small reduction in fibrinogen binding and greater reduction in elastin binding; when associated with A-354." evidence="11">
    <original>N</original>
    <variation>G</variation>
    <location>
        <position position="356"/>
    </location>
</feature>
<feature type="mutagenesis site" description="No reduction in elastin binding. Significant reduction in fibrinogen binding." evidence="11">
    <original>K</original>
    <variation>A</variation>
    <location>
        <position position="357"/>
    </location>
</feature>
<feature type="mutagenesis site" description="Significant reduction in fibrinogen and elastin binding; when associated with A-417." evidence="11">
    <original>A</original>
    <variation>G</variation>
    <location>
        <position position="415"/>
    </location>
</feature>
<feature type="mutagenesis site" description="Significant reduction in fibrinogen and elastin binding; when associated with G-415." evidence="11">
    <original>T</original>
    <variation>A</variation>
    <location>
        <position position="417"/>
    </location>
</feature>
<feature type="mutagenesis site" description="Abolishes interaction with elastin and fibrinogen." evidence="11">
    <location>
        <begin position="484"/>
        <end position="511"/>
    </location>
</feature>
<feature type="mutagenesis site" description="Significant reduction in fibrinogen and elastin binding." evidence="11">
    <original>G</original>
    <variation>A</variation>
    <location>
        <position position="497"/>
    </location>
</feature>
<feature type="mutagenesis site" description="Significant reduction in fibrinogen and elastin binding." evidence="11">
    <original>L</original>
    <variation>A</variation>
    <location>
        <position position="498"/>
    </location>
</feature>
<feature type="mutagenesis site" description="Abolishes interaction with elastin and fibrinogen." evidence="11">
    <location>
        <begin position="499"/>
        <end position="511"/>
    </location>
</feature>
<feature type="mutagenesis site" description="No change in elastin binding. Impairs fibrinogen binding." evidence="11">
    <location>
        <begin position="510"/>
        <end position="511"/>
    </location>
</feature>
<feature type="helix" evidence="23">
    <location>
        <begin position="198"/>
        <end position="200"/>
    </location>
</feature>
<feature type="strand" evidence="23">
    <location>
        <begin position="201"/>
        <end position="209"/>
    </location>
</feature>
<feature type="helix" evidence="23">
    <location>
        <begin position="211"/>
        <end position="213"/>
    </location>
</feature>
<feature type="strand" evidence="23">
    <location>
        <begin position="214"/>
        <end position="217"/>
    </location>
</feature>
<feature type="helix" evidence="22">
    <location>
        <begin position="219"/>
        <end position="221"/>
    </location>
</feature>
<feature type="strand" evidence="23">
    <location>
        <begin position="225"/>
        <end position="233"/>
    </location>
</feature>
<feature type="strand" evidence="23">
    <location>
        <begin position="242"/>
        <end position="247"/>
    </location>
</feature>
<feature type="strand" evidence="23">
    <location>
        <begin position="251"/>
        <end position="253"/>
    </location>
</feature>
<feature type="strand" evidence="23">
    <location>
        <begin position="265"/>
        <end position="267"/>
    </location>
</feature>
<feature type="strand" evidence="23">
    <location>
        <begin position="270"/>
        <end position="277"/>
    </location>
</feature>
<feature type="strand" evidence="23">
    <location>
        <begin position="282"/>
        <end position="287"/>
    </location>
</feature>
<feature type="helix" evidence="23">
    <location>
        <begin position="289"/>
        <end position="291"/>
    </location>
</feature>
<feature type="strand" evidence="23">
    <location>
        <begin position="298"/>
        <end position="307"/>
    </location>
</feature>
<feature type="turn" evidence="23">
    <location>
        <begin position="309"/>
        <end position="311"/>
    </location>
</feature>
<feature type="strand" evidence="23">
    <location>
        <begin position="314"/>
        <end position="324"/>
    </location>
</feature>
<feature type="strand" evidence="23">
    <location>
        <begin position="327"/>
        <end position="335"/>
    </location>
</feature>
<feature type="strand" evidence="23">
    <location>
        <begin position="344"/>
        <end position="356"/>
    </location>
</feature>
<feature type="turn" evidence="23">
    <location>
        <begin position="357"/>
        <end position="360"/>
    </location>
</feature>
<feature type="strand" evidence="23">
    <location>
        <begin position="361"/>
        <end position="370"/>
    </location>
</feature>
<feature type="strand" evidence="23">
    <location>
        <begin position="375"/>
        <end position="386"/>
    </location>
</feature>
<feature type="strand" evidence="23">
    <location>
        <begin position="396"/>
        <end position="402"/>
    </location>
</feature>
<feature type="helix" evidence="23">
    <location>
        <begin position="406"/>
        <end position="408"/>
    </location>
</feature>
<feature type="turn" evidence="23">
    <location>
        <begin position="420"/>
        <end position="422"/>
    </location>
</feature>
<feature type="strand" evidence="23">
    <location>
        <begin position="423"/>
        <end position="425"/>
    </location>
</feature>
<feature type="helix" evidence="23">
    <location>
        <begin position="427"/>
        <end position="429"/>
    </location>
</feature>
<feature type="helix" evidence="22">
    <location>
        <begin position="431"/>
        <end position="433"/>
    </location>
</feature>
<feature type="strand" evidence="23">
    <location>
        <begin position="434"/>
        <end position="436"/>
    </location>
</feature>
<feature type="strand" evidence="23">
    <location>
        <begin position="442"/>
        <end position="448"/>
    </location>
</feature>
<feature type="strand" evidence="23">
    <location>
        <begin position="453"/>
        <end position="460"/>
    </location>
</feature>
<feature type="strand" evidence="23">
    <location>
        <begin position="469"/>
        <end position="478"/>
    </location>
</feature>
<feature type="strand" evidence="23">
    <location>
        <begin position="490"/>
        <end position="501"/>
    </location>
</feature>
<feature type="strand" evidence="18">
    <location>
        <begin position="514"/>
        <end position="519"/>
    </location>
</feature>
<feature type="strand" evidence="18">
    <location>
        <begin position="521"/>
        <end position="524"/>
    </location>
</feature>
<feature type="strand" evidence="19">
    <location>
        <begin position="531"/>
        <end position="533"/>
    </location>
</feature>
<feature type="strand" evidence="19">
    <location>
        <begin position="542"/>
        <end position="545"/>
    </location>
</feature>
<feature type="strand" evidence="20">
    <location>
        <begin position="640"/>
        <end position="651"/>
    </location>
</feature>
<feature type="strand" evidence="21">
    <location>
        <begin position="658"/>
        <end position="660"/>
    </location>
</feature>
<feature type="strand" evidence="21">
    <location>
        <begin position="666"/>
        <end position="669"/>
    </location>
</feature>